<keyword id="KW-0030">Aminoacyl-tRNA synthetase</keyword>
<keyword id="KW-0067">ATP-binding</keyword>
<keyword id="KW-0963">Cytoplasm</keyword>
<keyword id="KW-0436">Ligase</keyword>
<keyword id="KW-0547">Nucleotide-binding</keyword>
<keyword id="KW-0648">Protein biosynthesis</keyword>
<dbReference type="EC" id="6.1.1.11" evidence="1"/>
<dbReference type="EMBL" id="CP000720">
    <property type="protein sequence ID" value="ABS47014.1"/>
    <property type="molecule type" value="Genomic_DNA"/>
</dbReference>
<dbReference type="RefSeq" id="WP_002211336.1">
    <property type="nucleotide sequence ID" value="NC_009708.1"/>
</dbReference>
<dbReference type="SMR" id="A7FJY0"/>
<dbReference type="GeneID" id="57977175"/>
<dbReference type="KEGG" id="ypi:YpsIP31758_2593"/>
<dbReference type="HOGENOM" id="CLU_023797_1_1_6"/>
<dbReference type="UniPathway" id="UPA00906">
    <property type="reaction ID" value="UER00895"/>
</dbReference>
<dbReference type="Proteomes" id="UP000002412">
    <property type="component" value="Chromosome"/>
</dbReference>
<dbReference type="GO" id="GO:0005737">
    <property type="term" value="C:cytoplasm"/>
    <property type="evidence" value="ECO:0007669"/>
    <property type="project" value="UniProtKB-SubCell"/>
</dbReference>
<dbReference type="GO" id="GO:0005524">
    <property type="term" value="F:ATP binding"/>
    <property type="evidence" value="ECO:0007669"/>
    <property type="project" value="UniProtKB-UniRule"/>
</dbReference>
<dbReference type="GO" id="GO:0004828">
    <property type="term" value="F:serine-tRNA ligase activity"/>
    <property type="evidence" value="ECO:0007669"/>
    <property type="project" value="UniProtKB-UniRule"/>
</dbReference>
<dbReference type="GO" id="GO:0016260">
    <property type="term" value="P:selenocysteine biosynthetic process"/>
    <property type="evidence" value="ECO:0007669"/>
    <property type="project" value="UniProtKB-UniRule"/>
</dbReference>
<dbReference type="GO" id="GO:0006434">
    <property type="term" value="P:seryl-tRNA aminoacylation"/>
    <property type="evidence" value="ECO:0007669"/>
    <property type="project" value="UniProtKB-UniRule"/>
</dbReference>
<dbReference type="CDD" id="cd00770">
    <property type="entry name" value="SerRS_core"/>
    <property type="match status" value="1"/>
</dbReference>
<dbReference type="FunFam" id="1.10.287.40:FF:000001">
    <property type="entry name" value="Serine--tRNA ligase"/>
    <property type="match status" value="1"/>
</dbReference>
<dbReference type="FunFam" id="3.30.930.10:FF:000018">
    <property type="entry name" value="Serine--tRNA ligase"/>
    <property type="match status" value="1"/>
</dbReference>
<dbReference type="Gene3D" id="3.30.930.10">
    <property type="entry name" value="Bira Bifunctional Protein, Domain 2"/>
    <property type="match status" value="1"/>
</dbReference>
<dbReference type="Gene3D" id="1.10.287.40">
    <property type="entry name" value="Serine-tRNA synthetase, tRNA binding domain"/>
    <property type="match status" value="1"/>
</dbReference>
<dbReference type="HAMAP" id="MF_00176">
    <property type="entry name" value="Ser_tRNA_synth_type1"/>
    <property type="match status" value="1"/>
</dbReference>
<dbReference type="InterPro" id="IPR002314">
    <property type="entry name" value="aa-tRNA-synt_IIb"/>
</dbReference>
<dbReference type="InterPro" id="IPR006195">
    <property type="entry name" value="aa-tRNA-synth_II"/>
</dbReference>
<dbReference type="InterPro" id="IPR045864">
    <property type="entry name" value="aa-tRNA-synth_II/BPL/LPL"/>
</dbReference>
<dbReference type="InterPro" id="IPR002317">
    <property type="entry name" value="Ser-tRNA-ligase_type_1"/>
</dbReference>
<dbReference type="InterPro" id="IPR015866">
    <property type="entry name" value="Ser-tRNA-synth_1_N"/>
</dbReference>
<dbReference type="InterPro" id="IPR042103">
    <property type="entry name" value="SerRS_1_N_sf"/>
</dbReference>
<dbReference type="InterPro" id="IPR033729">
    <property type="entry name" value="SerRS_core"/>
</dbReference>
<dbReference type="InterPro" id="IPR010978">
    <property type="entry name" value="tRNA-bd_arm"/>
</dbReference>
<dbReference type="NCBIfam" id="TIGR00414">
    <property type="entry name" value="serS"/>
    <property type="match status" value="1"/>
</dbReference>
<dbReference type="PANTHER" id="PTHR43697:SF1">
    <property type="entry name" value="SERINE--TRNA LIGASE"/>
    <property type="match status" value="1"/>
</dbReference>
<dbReference type="PANTHER" id="PTHR43697">
    <property type="entry name" value="SERYL-TRNA SYNTHETASE"/>
    <property type="match status" value="1"/>
</dbReference>
<dbReference type="Pfam" id="PF02403">
    <property type="entry name" value="Seryl_tRNA_N"/>
    <property type="match status" value="1"/>
</dbReference>
<dbReference type="Pfam" id="PF00587">
    <property type="entry name" value="tRNA-synt_2b"/>
    <property type="match status" value="1"/>
</dbReference>
<dbReference type="PIRSF" id="PIRSF001529">
    <property type="entry name" value="Ser-tRNA-synth_IIa"/>
    <property type="match status" value="1"/>
</dbReference>
<dbReference type="PRINTS" id="PR00981">
    <property type="entry name" value="TRNASYNTHSER"/>
</dbReference>
<dbReference type="SUPFAM" id="SSF55681">
    <property type="entry name" value="Class II aaRS and biotin synthetases"/>
    <property type="match status" value="1"/>
</dbReference>
<dbReference type="SUPFAM" id="SSF46589">
    <property type="entry name" value="tRNA-binding arm"/>
    <property type="match status" value="1"/>
</dbReference>
<dbReference type="PROSITE" id="PS50862">
    <property type="entry name" value="AA_TRNA_LIGASE_II"/>
    <property type="match status" value="1"/>
</dbReference>
<comment type="function">
    <text evidence="1">Catalyzes the attachment of serine to tRNA(Ser). Is also able to aminoacylate tRNA(Sec) with serine, to form the misacylated tRNA L-seryl-tRNA(Sec), which will be further converted into selenocysteinyl-tRNA(Sec).</text>
</comment>
<comment type="catalytic activity">
    <reaction evidence="1">
        <text>tRNA(Ser) + L-serine + ATP = L-seryl-tRNA(Ser) + AMP + diphosphate + H(+)</text>
        <dbReference type="Rhea" id="RHEA:12292"/>
        <dbReference type="Rhea" id="RHEA-COMP:9669"/>
        <dbReference type="Rhea" id="RHEA-COMP:9703"/>
        <dbReference type="ChEBI" id="CHEBI:15378"/>
        <dbReference type="ChEBI" id="CHEBI:30616"/>
        <dbReference type="ChEBI" id="CHEBI:33019"/>
        <dbReference type="ChEBI" id="CHEBI:33384"/>
        <dbReference type="ChEBI" id="CHEBI:78442"/>
        <dbReference type="ChEBI" id="CHEBI:78533"/>
        <dbReference type="ChEBI" id="CHEBI:456215"/>
        <dbReference type="EC" id="6.1.1.11"/>
    </reaction>
</comment>
<comment type="catalytic activity">
    <reaction evidence="1">
        <text>tRNA(Sec) + L-serine + ATP = L-seryl-tRNA(Sec) + AMP + diphosphate + H(+)</text>
        <dbReference type="Rhea" id="RHEA:42580"/>
        <dbReference type="Rhea" id="RHEA-COMP:9742"/>
        <dbReference type="Rhea" id="RHEA-COMP:10128"/>
        <dbReference type="ChEBI" id="CHEBI:15378"/>
        <dbReference type="ChEBI" id="CHEBI:30616"/>
        <dbReference type="ChEBI" id="CHEBI:33019"/>
        <dbReference type="ChEBI" id="CHEBI:33384"/>
        <dbReference type="ChEBI" id="CHEBI:78442"/>
        <dbReference type="ChEBI" id="CHEBI:78533"/>
        <dbReference type="ChEBI" id="CHEBI:456215"/>
        <dbReference type="EC" id="6.1.1.11"/>
    </reaction>
</comment>
<comment type="pathway">
    <text evidence="1">Aminoacyl-tRNA biosynthesis; selenocysteinyl-tRNA(Sec) biosynthesis; L-seryl-tRNA(Sec) from L-serine and tRNA(Sec): step 1/1.</text>
</comment>
<comment type="subunit">
    <text evidence="1">Homodimer. The tRNA molecule binds across the dimer.</text>
</comment>
<comment type="subcellular location">
    <subcellularLocation>
        <location evidence="1">Cytoplasm</location>
    </subcellularLocation>
</comment>
<comment type="domain">
    <text evidence="1">Consists of two distinct domains, a catalytic core and a N-terminal extension that is involved in tRNA binding.</text>
</comment>
<comment type="similarity">
    <text evidence="1">Belongs to the class-II aminoacyl-tRNA synthetase family. Type-1 seryl-tRNA synthetase subfamily.</text>
</comment>
<sequence>MLDPNMLRNELDAVAEKLARRGFKLDVEVLRQQEERRKVLQVETESLQAERNSRSKQIGAAKARGEDIEPLRLEVNALGEKLDAAKAELDKLQNEIRDLALSIPNLPDDSVPVGKNENDNIEVSRWGEPRKYDFDVKDHVSLGEMAGGLDFAAAVKLTGARFVVMKGQIARMHRALSQFMLDLHTEKHGYLEAYVPYLVNHATLYGTGQLPKFGEDLFHTKPLAEESDNSNYALIPTAEVPLTNLVRDEILEEDSLPLKLTAHTPCFRSEAGSYGRDTRGLIRMHQFDKVEMVQITRPEDSMAALEELTGHAEKVLQLLELPYRKVLLCTGDMGFGSSKTYDLEVWLPAQDTYREISSCSNMWDFQARRMQARYRNKTDRKTRLVHTLNGSGLAVGRTLVAVLENYQQADGRIQVPDVLRPYMGGLEYIG</sequence>
<protein>
    <recommendedName>
        <fullName evidence="1">Serine--tRNA ligase</fullName>
        <ecNumber evidence="1">6.1.1.11</ecNumber>
    </recommendedName>
    <alternativeName>
        <fullName evidence="1">Seryl-tRNA synthetase</fullName>
        <shortName evidence="1">SerRS</shortName>
    </alternativeName>
    <alternativeName>
        <fullName evidence="1">Seryl-tRNA(Ser/Sec) synthetase</fullName>
    </alternativeName>
</protein>
<accession>A7FJY0</accession>
<evidence type="ECO:0000255" key="1">
    <source>
        <dbReference type="HAMAP-Rule" id="MF_00176"/>
    </source>
</evidence>
<organism>
    <name type="scientific">Yersinia pseudotuberculosis serotype O:1b (strain IP 31758)</name>
    <dbReference type="NCBI Taxonomy" id="349747"/>
    <lineage>
        <taxon>Bacteria</taxon>
        <taxon>Pseudomonadati</taxon>
        <taxon>Pseudomonadota</taxon>
        <taxon>Gammaproteobacteria</taxon>
        <taxon>Enterobacterales</taxon>
        <taxon>Yersiniaceae</taxon>
        <taxon>Yersinia</taxon>
    </lineage>
</organism>
<proteinExistence type="inferred from homology"/>
<gene>
    <name evidence="1" type="primary">serS</name>
    <name type="ordered locus">YpsIP31758_2593</name>
</gene>
<feature type="chain" id="PRO_1000058359" description="Serine--tRNA ligase">
    <location>
        <begin position="1"/>
        <end position="430"/>
    </location>
</feature>
<feature type="binding site" evidence="1">
    <location>
        <begin position="237"/>
        <end position="239"/>
    </location>
    <ligand>
        <name>L-serine</name>
        <dbReference type="ChEBI" id="CHEBI:33384"/>
    </ligand>
</feature>
<feature type="binding site" evidence="1">
    <location>
        <begin position="268"/>
        <end position="270"/>
    </location>
    <ligand>
        <name>ATP</name>
        <dbReference type="ChEBI" id="CHEBI:30616"/>
    </ligand>
</feature>
<feature type="binding site" evidence="1">
    <location>
        <position position="291"/>
    </location>
    <ligand>
        <name>L-serine</name>
        <dbReference type="ChEBI" id="CHEBI:33384"/>
    </ligand>
</feature>
<feature type="binding site" evidence="1">
    <location>
        <begin position="355"/>
        <end position="358"/>
    </location>
    <ligand>
        <name>ATP</name>
        <dbReference type="ChEBI" id="CHEBI:30616"/>
    </ligand>
</feature>
<feature type="binding site" evidence="1">
    <location>
        <position position="391"/>
    </location>
    <ligand>
        <name>L-serine</name>
        <dbReference type="ChEBI" id="CHEBI:33384"/>
    </ligand>
</feature>
<reference key="1">
    <citation type="journal article" date="2007" name="PLoS Genet.">
        <title>The complete genome sequence of Yersinia pseudotuberculosis IP31758, the causative agent of Far East scarlet-like fever.</title>
        <authorList>
            <person name="Eppinger M."/>
            <person name="Rosovitz M.J."/>
            <person name="Fricke W.F."/>
            <person name="Rasko D.A."/>
            <person name="Kokorina G."/>
            <person name="Fayolle C."/>
            <person name="Lindler L.E."/>
            <person name="Carniel E."/>
            <person name="Ravel J."/>
        </authorList>
    </citation>
    <scope>NUCLEOTIDE SEQUENCE [LARGE SCALE GENOMIC DNA]</scope>
    <source>
        <strain>IP 31758</strain>
    </source>
</reference>
<name>SYS_YERP3</name>